<feature type="initiator methionine" description="Removed" evidence="1">
    <location>
        <position position="1"/>
    </location>
</feature>
<feature type="chain" id="PRO_0000219015" description="Rho GDP-dissociation inhibitor 2">
    <location>
        <begin position="2"/>
        <end position="200"/>
    </location>
</feature>
<feature type="region of interest" description="Disordered" evidence="2">
    <location>
        <begin position="1"/>
        <end position="40"/>
    </location>
</feature>
<feature type="compositionally biased region" description="Basic and acidic residues" evidence="2">
    <location>
        <begin position="30"/>
        <end position="40"/>
    </location>
</feature>
<feature type="modified residue" description="N-acetylthreonine" evidence="1">
    <location>
        <position position="2"/>
    </location>
</feature>
<feature type="modified residue" description="N6-acetyllysine" evidence="1">
    <location>
        <position position="20"/>
    </location>
</feature>
<feature type="modified residue" description="Phosphotyrosine" evidence="1">
    <location>
        <position position="23"/>
    </location>
</feature>
<feature type="modified residue" description="N6-acetyllysine" evidence="1">
    <location>
        <position position="24"/>
    </location>
</feature>
<feature type="modified residue" description="N6-acetyllysine" evidence="1">
    <location>
        <position position="39"/>
    </location>
</feature>
<feature type="modified residue" description="N6-acetyllysine" evidence="1">
    <location>
        <position position="46"/>
    </location>
</feature>
<feature type="modified residue" description="N6-acetyllysine" evidence="1">
    <location>
        <position position="101"/>
    </location>
</feature>
<feature type="modified residue" description="N6-acetyllysine" evidence="1">
    <location>
        <position position="123"/>
    </location>
</feature>
<feature type="modified residue" description="Phosphoserine" evidence="1">
    <location>
        <position position="144"/>
    </location>
</feature>
<feature type="modified residue" description="N6-acetyllysine" evidence="1">
    <location>
        <position position="174"/>
    </location>
</feature>
<keyword id="KW-0007">Acetylation</keyword>
<keyword id="KW-0963">Cytoplasm</keyword>
<keyword id="KW-0343">GTPase activation</keyword>
<keyword id="KW-0597">Phosphoprotein</keyword>
<keyword id="KW-1185">Reference proteome</keyword>
<accession>Q9TU03</accession>
<accession>Q3ZCK4</accession>
<protein>
    <recommendedName>
        <fullName>Rho GDP-dissociation inhibitor 2</fullName>
        <shortName>Rho GDI 2</shortName>
    </recommendedName>
    <alternativeName>
        <fullName>D4-GDP-dissociation inhibitor</fullName>
        <shortName>D4-GDI</shortName>
    </alternativeName>
    <alternativeName>
        <fullName>Ly-GDI</fullName>
    </alternativeName>
    <alternativeName>
        <fullName>Rho-GDI beta</fullName>
    </alternativeName>
</protein>
<organism>
    <name type="scientific">Bos taurus</name>
    <name type="common">Bovine</name>
    <dbReference type="NCBI Taxonomy" id="9913"/>
    <lineage>
        <taxon>Eukaryota</taxon>
        <taxon>Metazoa</taxon>
        <taxon>Chordata</taxon>
        <taxon>Craniata</taxon>
        <taxon>Vertebrata</taxon>
        <taxon>Euteleostomi</taxon>
        <taxon>Mammalia</taxon>
        <taxon>Eutheria</taxon>
        <taxon>Laurasiatheria</taxon>
        <taxon>Artiodactyla</taxon>
        <taxon>Ruminantia</taxon>
        <taxon>Pecora</taxon>
        <taxon>Bovidae</taxon>
        <taxon>Bovinae</taxon>
        <taxon>Bos</taxon>
    </lineage>
</organism>
<name>GDIR2_BOVIN</name>
<evidence type="ECO:0000250" key="1">
    <source>
        <dbReference type="UniProtKB" id="P52566"/>
    </source>
</evidence>
<evidence type="ECO:0000256" key="2">
    <source>
        <dbReference type="SAM" id="MobiDB-lite"/>
    </source>
</evidence>
<evidence type="ECO:0000269" key="3">
    <source>
    </source>
</evidence>
<evidence type="ECO:0000305" key="4"/>
<gene>
    <name type="primary">ARHGDIB</name>
    <name type="synonym">GDID4</name>
</gene>
<reference key="1">
    <citation type="journal article" date="2000" name="Vet. Immunol. Immunopathol.">
        <title>Cloning of bovine low molecular weight GTPases (Rac1 and Rac2) and Rho GDP-dissociation inhibitor 2 (D4-GDI).</title>
        <authorList>
            <person name="Davis A.R."/>
            <person name="Clements M.K."/>
            <person name="Bunger P.L."/>
            <person name="Siemsen D.W."/>
            <person name="Quinn M.T."/>
        </authorList>
    </citation>
    <scope>NUCLEOTIDE SEQUENCE [MRNA]</scope>
    <scope>SUBCELLULAR LOCATION</scope>
</reference>
<reference key="2">
    <citation type="submission" date="2005-08" db="EMBL/GenBank/DDBJ databases">
        <authorList>
            <consortium name="NIH - Mammalian Gene Collection (MGC) project"/>
        </authorList>
    </citation>
    <scope>NUCLEOTIDE SEQUENCE [LARGE SCALE MRNA]</scope>
    <source>
        <strain>Crossbred X Angus</strain>
        <tissue>Ileum</tissue>
    </source>
</reference>
<sequence length="200" mass="22794">MTEKAPEPHVEEDDDELDGKLNYKPPPQKSLKELQEMDKDDESLTKYKKTLLGDGPVVADPTAPNVTVTRLTLVCESAPGPITMDLTGDLEALKKETFVLKEGVEYRVKINFKVNKDIVSGLKYVQHTYRTGVKVDKATFMVGSYGPRPEEYEFLTPIEEAPKGMLARGTYHNKSFFTDDDKHDHLTWEWNLSIKKDWTE</sequence>
<comment type="function">
    <text evidence="1">Regulates the GDP/GTP exchange reaction of the Rho proteins by inhibiting the dissociation of GDP from them, and the subsequent binding of GTP to them. Regulates reorganization of the actin cytoskeleton mediated by Rho family members.</text>
</comment>
<comment type="subunit">
    <text evidence="1">Interacts with RHOA. Interacts with RAC1. Interacts with RAC2. Interacts with CDC42.</text>
</comment>
<comment type="subcellular location">
    <subcellularLocation>
        <location evidence="3">Cytoplasm</location>
        <location evidence="3">Cytosol</location>
    </subcellularLocation>
</comment>
<comment type="similarity">
    <text evidence="4">Belongs to the Rho GDI family.</text>
</comment>
<proteinExistence type="evidence at transcript level"/>
<dbReference type="EMBL" id="AF182001">
    <property type="protein sequence ID" value="AAF00938.1"/>
    <property type="molecule type" value="mRNA"/>
</dbReference>
<dbReference type="EMBL" id="BC102109">
    <property type="protein sequence ID" value="AAI02110.1"/>
    <property type="molecule type" value="mRNA"/>
</dbReference>
<dbReference type="RefSeq" id="NP_786991.1">
    <property type="nucleotide sequence ID" value="NM_175797.2"/>
</dbReference>
<dbReference type="SMR" id="Q9TU03"/>
<dbReference type="FunCoup" id="Q9TU03">
    <property type="interactions" value="1519"/>
</dbReference>
<dbReference type="STRING" id="9913.ENSBTAP00000007933"/>
<dbReference type="PaxDb" id="9913-ENSBTAP00000007933"/>
<dbReference type="PeptideAtlas" id="Q9TU03"/>
<dbReference type="GeneID" id="327676"/>
<dbReference type="KEGG" id="bta:327676"/>
<dbReference type="CTD" id="397"/>
<dbReference type="eggNOG" id="KOG3205">
    <property type="taxonomic scope" value="Eukaryota"/>
</dbReference>
<dbReference type="HOGENOM" id="CLU_076228_1_1_1"/>
<dbReference type="InParanoid" id="Q9TU03"/>
<dbReference type="OrthoDB" id="1683373at2759"/>
<dbReference type="TreeFam" id="TF105387"/>
<dbReference type="Proteomes" id="UP000009136">
    <property type="component" value="Unplaced"/>
</dbReference>
<dbReference type="GO" id="GO:0005829">
    <property type="term" value="C:cytosol"/>
    <property type="evidence" value="ECO:0000314"/>
    <property type="project" value="UniProtKB"/>
</dbReference>
<dbReference type="GO" id="GO:0016020">
    <property type="term" value="C:membrane"/>
    <property type="evidence" value="ECO:0000318"/>
    <property type="project" value="GO_Central"/>
</dbReference>
<dbReference type="GO" id="GO:0005096">
    <property type="term" value="F:GTPase activator activity"/>
    <property type="evidence" value="ECO:0007669"/>
    <property type="project" value="UniProtKB-KW"/>
</dbReference>
<dbReference type="GO" id="GO:0005094">
    <property type="term" value="F:Rho GDP-dissociation inhibitor activity"/>
    <property type="evidence" value="ECO:0000250"/>
    <property type="project" value="UniProtKB"/>
</dbReference>
<dbReference type="GO" id="GO:0031267">
    <property type="term" value="F:small GTPase binding"/>
    <property type="evidence" value="ECO:0000250"/>
    <property type="project" value="UniProtKB"/>
</dbReference>
<dbReference type="GO" id="GO:0035023">
    <property type="term" value="P:regulation of Rho protein signal transduction"/>
    <property type="evidence" value="ECO:0000250"/>
    <property type="project" value="UniProtKB"/>
</dbReference>
<dbReference type="GO" id="GO:0007266">
    <property type="term" value="P:Rho protein signal transduction"/>
    <property type="evidence" value="ECO:0000318"/>
    <property type="project" value="GO_Central"/>
</dbReference>
<dbReference type="FunFam" id="2.70.50.30:FF:000004">
    <property type="entry name" value="Rho GDP-dissociation inhibitor 1"/>
    <property type="match status" value="1"/>
</dbReference>
<dbReference type="Gene3D" id="2.70.50.30">
    <property type="entry name" value="Coagulation Factor XIII, subunit A, domain 1"/>
    <property type="match status" value="1"/>
</dbReference>
<dbReference type="InterPro" id="IPR014756">
    <property type="entry name" value="Ig_E-set"/>
</dbReference>
<dbReference type="InterPro" id="IPR000406">
    <property type="entry name" value="Rho_GDI"/>
</dbReference>
<dbReference type="InterPro" id="IPR024792">
    <property type="entry name" value="RhoGDI_dom_sf"/>
</dbReference>
<dbReference type="PANTHER" id="PTHR10980">
    <property type="entry name" value="RHO GDP-DISSOCIATION INHIBITOR"/>
    <property type="match status" value="1"/>
</dbReference>
<dbReference type="PANTHER" id="PTHR10980:SF15">
    <property type="entry name" value="RHO GDP-DISSOCIATION INHIBITOR 2"/>
    <property type="match status" value="1"/>
</dbReference>
<dbReference type="Pfam" id="PF02115">
    <property type="entry name" value="Rho_GDI"/>
    <property type="match status" value="1"/>
</dbReference>
<dbReference type="PRINTS" id="PR00492">
    <property type="entry name" value="RHOGDI"/>
</dbReference>
<dbReference type="SUPFAM" id="SSF81296">
    <property type="entry name" value="E set domains"/>
    <property type="match status" value="1"/>
</dbReference>